<feature type="chain" id="PRO_0000103447" description="Dihydroxy-acid dehydratase">
    <location>
        <begin position="1"/>
        <end position="617"/>
    </location>
</feature>
<feature type="active site" description="Proton acceptor" evidence="1">
    <location>
        <position position="517"/>
    </location>
</feature>
<feature type="binding site" evidence="1">
    <location>
        <position position="81"/>
    </location>
    <ligand>
        <name>Mg(2+)</name>
        <dbReference type="ChEBI" id="CHEBI:18420"/>
    </ligand>
</feature>
<feature type="binding site" evidence="1">
    <location>
        <position position="122"/>
    </location>
    <ligand>
        <name>[2Fe-2S] cluster</name>
        <dbReference type="ChEBI" id="CHEBI:190135"/>
    </ligand>
</feature>
<feature type="binding site" evidence="1">
    <location>
        <position position="123"/>
    </location>
    <ligand>
        <name>Mg(2+)</name>
        <dbReference type="ChEBI" id="CHEBI:18420"/>
    </ligand>
</feature>
<feature type="binding site" description="via carbamate group" evidence="1">
    <location>
        <position position="124"/>
    </location>
    <ligand>
        <name>Mg(2+)</name>
        <dbReference type="ChEBI" id="CHEBI:18420"/>
    </ligand>
</feature>
<feature type="binding site" evidence="1">
    <location>
        <position position="195"/>
    </location>
    <ligand>
        <name>[2Fe-2S] cluster</name>
        <dbReference type="ChEBI" id="CHEBI:190135"/>
    </ligand>
</feature>
<feature type="binding site" evidence="1">
    <location>
        <position position="491"/>
    </location>
    <ligand>
        <name>Mg(2+)</name>
        <dbReference type="ChEBI" id="CHEBI:18420"/>
    </ligand>
</feature>
<feature type="modified residue" description="N6-carboxylysine" evidence="1">
    <location>
        <position position="124"/>
    </location>
</feature>
<organism>
    <name type="scientific">Buchnera aphidicola subsp. Schizaphis graminum (strain Sg)</name>
    <dbReference type="NCBI Taxonomy" id="198804"/>
    <lineage>
        <taxon>Bacteria</taxon>
        <taxon>Pseudomonadati</taxon>
        <taxon>Pseudomonadota</taxon>
        <taxon>Gammaproteobacteria</taxon>
        <taxon>Enterobacterales</taxon>
        <taxon>Erwiniaceae</taxon>
        <taxon>Buchnera</taxon>
    </lineage>
</organism>
<accession>O51887</accession>
<keyword id="KW-0001">2Fe-2S</keyword>
<keyword id="KW-0028">Amino-acid biosynthesis</keyword>
<keyword id="KW-0100">Branched-chain amino acid biosynthesis</keyword>
<keyword id="KW-0408">Iron</keyword>
<keyword id="KW-0411">Iron-sulfur</keyword>
<keyword id="KW-0456">Lyase</keyword>
<keyword id="KW-0460">Magnesium</keyword>
<keyword id="KW-0479">Metal-binding</keyword>
<gene>
    <name evidence="1" type="primary">ilvD</name>
    <name type="ordered locus">BUsg_576</name>
</gene>
<comment type="function">
    <text evidence="1">Functions in the biosynthesis of branched-chain amino acids. Catalyzes the dehydration of (2R,3R)-2,3-dihydroxy-3-methylpentanoate (2,3-dihydroxy-3-methylvalerate) into 2-oxo-3-methylpentanoate (2-oxo-3-methylvalerate) and of (2R)-2,3-dihydroxy-3-methylbutanoate (2,3-dihydroxyisovalerate) into 2-oxo-3-methylbutanoate (2-oxoisovalerate), the penultimate precursor to L-isoleucine and L-valine, respectively.</text>
</comment>
<comment type="catalytic activity">
    <reaction evidence="1">
        <text>(2R)-2,3-dihydroxy-3-methylbutanoate = 3-methyl-2-oxobutanoate + H2O</text>
        <dbReference type="Rhea" id="RHEA:24809"/>
        <dbReference type="ChEBI" id="CHEBI:11851"/>
        <dbReference type="ChEBI" id="CHEBI:15377"/>
        <dbReference type="ChEBI" id="CHEBI:49072"/>
        <dbReference type="EC" id="4.2.1.9"/>
    </reaction>
    <physiologicalReaction direction="left-to-right" evidence="1">
        <dbReference type="Rhea" id="RHEA:24810"/>
    </physiologicalReaction>
</comment>
<comment type="catalytic activity">
    <reaction evidence="1">
        <text>(2R,3R)-2,3-dihydroxy-3-methylpentanoate = (S)-3-methyl-2-oxopentanoate + H2O</text>
        <dbReference type="Rhea" id="RHEA:27694"/>
        <dbReference type="ChEBI" id="CHEBI:15377"/>
        <dbReference type="ChEBI" id="CHEBI:35146"/>
        <dbReference type="ChEBI" id="CHEBI:49258"/>
        <dbReference type="EC" id="4.2.1.9"/>
    </reaction>
    <physiologicalReaction direction="left-to-right" evidence="1">
        <dbReference type="Rhea" id="RHEA:27695"/>
    </physiologicalReaction>
</comment>
<comment type="cofactor">
    <cofactor evidence="1">
        <name>[2Fe-2S] cluster</name>
        <dbReference type="ChEBI" id="CHEBI:190135"/>
    </cofactor>
    <text evidence="1">Binds 1 [2Fe-2S] cluster per subunit. This cluster acts as a Lewis acid cofactor.</text>
</comment>
<comment type="cofactor">
    <cofactor evidence="1">
        <name>Mg(2+)</name>
        <dbReference type="ChEBI" id="CHEBI:18420"/>
    </cofactor>
</comment>
<comment type="pathway">
    <text evidence="1">Amino-acid biosynthesis; L-isoleucine biosynthesis; L-isoleucine from 2-oxobutanoate: step 3/4.</text>
</comment>
<comment type="pathway">
    <text evidence="1">Amino-acid biosynthesis; L-valine biosynthesis; L-valine from pyruvate: step 3/4.</text>
</comment>
<comment type="subunit">
    <text evidence="1">Homodimer.</text>
</comment>
<comment type="similarity">
    <text evidence="1">Belongs to the IlvD/Edd family.</text>
</comment>
<sequence>MPKYRSFTTTHGRNMSGARSLWRATGMTDEDFKKPIIAIVNSFSQFVPGHIHLQEVGKIISKEIKKYGGVPKEFNTIAIDDGIAMGHSGMLYSLPSRELIADSIEYVINAHCVDSMICVSNCDKITPAMFMASLRLNIPSVFVSGGPMEAGKIKTKDKTKKIDLVDAIIHGGDSNKSDDFIREIELSACPTCGSCSGMFTANSMNCLIEAIGLSLPGNGTLLATHIDRKKLFKKSARNIVKITKDYYLNNNKNVLPRNIANKESFENAMALDIAMGGSTNTILHLLAAAYEGKVDFKMSDINNLSKKIPHICKVAPSTNLYHVEDVHRAGGVMRILGELNRSNLLNKKTENILGLNLEKTLKKYDILSTKNKNVIKMFHAGPGGNRTIKPFSQNYRWNKLDKDRVNGCIRSHENAYSKNGGLSVLYGNLAKNGCIIKTASIDKKHYIFSGPAKVYESQEEAVSAILSGKIIAGDVIVIRYEGPKGGPGMQEMLYPTTYLKSINLDKQCALITDGRFSGGTSGLSIGHISPEAANKGIIALVENGDDIQINIVNKTIHLNITEKELNLRIIKENAKGLKAYKPLNRKRNISFALRAYAHFALSADKGAIRNKKKLFNF</sequence>
<reference key="1">
    <citation type="journal article" date="1998" name="Curr. Microbiol.">
        <title>Sequence analysis of a 34.7-kb DNA segment from the genome of Buchnera aphidicola (endosymbiont of aphids) containing groEL, dnaA, the atp operon, gidA, and rho.</title>
        <authorList>
            <person name="Clark M.A."/>
            <person name="Baumann L."/>
            <person name="Baumann P."/>
        </authorList>
    </citation>
    <scope>NUCLEOTIDE SEQUENCE [GENOMIC DNA]</scope>
</reference>
<reference key="2">
    <citation type="journal article" date="2002" name="Science">
        <title>50 million years of genomic stasis in endosymbiotic bacteria.</title>
        <authorList>
            <person name="Tamas I."/>
            <person name="Klasson L."/>
            <person name="Canbaeck B."/>
            <person name="Naeslund A.K."/>
            <person name="Eriksson A.-S."/>
            <person name="Wernegreen J.J."/>
            <person name="Sandstroem J.P."/>
            <person name="Moran N.A."/>
            <person name="Andersson S.G.E."/>
        </authorList>
    </citation>
    <scope>NUCLEOTIDE SEQUENCE [LARGE SCALE GENOMIC DNA]</scope>
    <source>
        <strain>Sg</strain>
    </source>
</reference>
<proteinExistence type="inferred from homology"/>
<protein>
    <recommendedName>
        <fullName evidence="1">Dihydroxy-acid dehydratase</fullName>
        <shortName evidence="1">DAD</shortName>
        <ecNumber evidence="1">4.2.1.9</ecNumber>
    </recommendedName>
</protein>
<evidence type="ECO:0000255" key="1">
    <source>
        <dbReference type="HAMAP-Rule" id="MF_00012"/>
    </source>
</evidence>
<dbReference type="EC" id="4.2.1.9" evidence="1"/>
<dbReference type="EMBL" id="AF008210">
    <property type="protein sequence ID" value="AAC38125.1"/>
    <property type="molecule type" value="Genomic_DNA"/>
</dbReference>
<dbReference type="EMBL" id="AE013218">
    <property type="protein sequence ID" value="AAM68110.1"/>
    <property type="molecule type" value="Genomic_DNA"/>
</dbReference>
<dbReference type="RefSeq" id="WP_011054076.1">
    <property type="nucleotide sequence ID" value="NC_004061.1"/>
</dbReference>
<dbReference type="SMR" id="O51887"/>
<dbReference type="STRING" id="198804.BUsg_576"/>
<dbReference type="GeneID" id="93004057"/>
<dbReference type="KEGG" id="bas:BUsg_576"/>
<dbReference type="eggNOG" id="COG0129">
    <property type="taxonomic scope" value="Bacteria"/>
</dbReference>
<dbReference type="HOGENOM" id="CLU_014271_4_2_6"/>
<dbReference type="UniPathway" id="UPA00047">
    <property type="reaction ID" value="UER00057"/>
</dbReference>
<dbReference type="UniPathway" id="UPA00049">
    <property type="reaction ID" value="UER00061"/>
</dbReference>
<dbReference type="Proteomes" id="UP000000416">
    <property type="component" value="Chromosome"/>
</dbReference>
<dbReference type="GO" id="GO:0005829">
    <property type="term" value="C:cytosol"/>
    <property type="evidence" value="ECO:0007669"/>
    <property type="project" value="TreeGrafter"/>
</dbReference>
<dbReference type="GO" id="GO:0051537">
    <property type="term" value="F:2 iron, 2 sulfur cluster binding"/>
    <property type="evidence" value="ECO:0007669"/>
    <property type="project" value="UniProtKB-UniRule"/>
</dbReference>
<dbReference type="GO" id="GO:0004160">
    <property type="term" value="F:dihydroxy-acid dehydratase activity"/>
    <property type="evidence" value="ECO:0007669"/>
    <property type="project" value="UniProtKB-UniRule"/>
</dbReference>
<dbReference type="GO" id="GO:0000287">
    <property type="term" value="F:magnesium ion binding"/>
    <property type="evidence" value="ECO:0007669"/>
    <property type="project" value="UniProtKB-UniRule"/>
</dbReference>
<dbReference type="GO" id="GO:0009097">
    <property type="term" value="P:isoleucine biosynthetic process"/>
    <property type="evidence" value="ECO:0007669"/>
    <property type="project" value="UniProtKB-UniRule"/>
</dbReference>
<dbReference type="GO" id="GO:0009099">
    <property type="term" value="P:L-valine biosynthetic process"/>
    <property type="evidence" value="ECO:0007669"/>
    <property type="project" value="UniProtKB-UniRule"/>
</dbReference>
<dbReference type="FunFam" id="3.50.30.80:FF:000001">
    <property type="entry name" value="Dihydroxy-acid dehydratase"/>
    <property type="match status" value="1"/>
</dbReference>
<dbReference type="Gene3D" id="3.50.30.80">
    <property type="entry name" value="IlvD/EDD C-terminal domain-like"/>
    <property type="match status" value="1"/>
</dbReference>
<dbReference type="HAMAP" id="MF_00012">
    <property type="entry name" value="IlvD"/>
    <property type="match status" value="1"/>
</dbReference>
<dbReference type="InterPro" id="IPR042096">
    <property type="entry name" value="Dihydro-acid_dehy_C"/>
</dbReference>
<dbReference type="InterPro" id="IPR004404">
    <property type="entry name" value="DihydroxyA_deHydtase"/>
</dbReference>
<dbReference type="InterPro" id="IPR020558">
    <property type="entry name" value="DiOHA_6PGluconate_deHydtase_CS"/>
</dbReference>
<dbReference type="InterPro" id="IPR056740">
    <property type="entry name" value="ILV_EDD_C"/>
</dbReference>
<dbReference type="InterPro" id="IPR000581">
    <property type="entry name" value="ILV_EDD_N"/>
</dbReference>
<dbReference type="InterPro" id="IPR037237">
    <property type="entry name" value="IlvD/EDD_N"/>
</dbReference>
<dbReference type="NCBIfam" id="TIGR00110">
    <property type="entry name" value="ilvD"/>
    <property type="match status" value="1"/>
</dbReference>
<dbReference type="NCBIfam" id="NF009103">
    <property type="entry name" value="PRK12448.1"/>
    <property type="match status" value="1"/>
</dbReference>
<dbReference type="PANTHER" id="PTHR43661">
    <property type="entry name" value="D-XYLONATE DEHYDRATASE"/>
    <property type="match status" value="1"/>
</dbReference>
<dbReference type="PANTHER" id="PTHR43661:SF3">
    <property type="entry name" value="D-XYLONATE DEHYDRATASE YAGF-RELATED"/>
    <property type="match status" value="1"/>
</dbReference>
<dbReference type="Pfam" id="PF24877">
    <property type="entry name" value="ILV_EDD_C"/>
    <property type="match status" value="1"/>
</dbReference>
<dbReference type="Pfam" id="PF00920">
    <property type="entry name" value="ILVD_EDD_N"/>
    <property type="match status" value="1"/>
</dbReference>
<dbReference type="SUPFAM" id="SSF143975">
    <property type="entry name" value="IlvD/EDD N-terminal domain-like"/>
    <property type="match status" value="1"/>
</dbReference>
<dbReference type="SUPFAM" id="SSF52016">
    <property type="entry name" value="LeuD/IlvD-like"/>
    <property type="match status" value="1"/>
</dbReference>
<dbReference type="PROSITE" id="PS00886">
    <property type="entry name" value="ILVD_EDD_1"/>
    <property type="match status" value="1"/>
</dbReference>
<dbReference type="PROSITE" id="PS00887">
    <property type="entry name" value="ILVD_EDD_2"/>
    <property type="match status" value="1"/>
</dbReference>
<name>ILVD_BUCAP</name>